<proteinExistence type="evidence at transcript level"/>
<name>PR2A1_MOUSE</name>
<sequence>MQLSVTHPCCRTLILLLVSNLLLWESEAVLPICSVRNGRCFGSFEELLERAVSLSEEISKKAFELFTAFDSQYAQSHQLIVKSLKKCHTSSLDLPKPGSQAMQTHPVTLLKLASKLLRAWQVPLNHLVNNLPSLKNVSPSILSKAKEIEEKSNGLLEGVKSILIQMQNGDTEDENYPGWSGLASLKSETEDIRLFAYYNMIRCEGRDTQKVETALKMVKCKISNENNC</sequence>
<dbReference type="EMBL" id="AB032428">
    <property type="protein sequence ID" value="BAB40452.1"/>
    <property type="molecule type" value="mRNA"/>
</dbReference>
<dbReference type="EMBL" id="AF226610">
    <property type="protein sequence ID" value="AAF89999.1"/>
    <property type="molecule type" value="mRNA"/>
</dbReference>
<dbReference type="EMBL" id="AF234636">
    <property type="protein sequence ID" value="AAF40435.1"/>
    <property type="molecule type" value="mRNA"/>
</dbReference>
<dbReference type="EMBL" id="AF272368">
    <property type="protein sequence ID" value="AAF76230.1"/>
    <property type="molecule type" value="mRNA"/>
</dbReference>
<dbReference type="EMBL" id="AK005424">
    <property type="protein sequence ID" value="BAB24018.1"/>
    <property type="molecule type" value="mRNA"/>
</dbReference>
<dbReference type="EMBL" id="AL627326">
    <property type="status" value="NOT_ANNOTATED_CDS"/>
    <property type="molecule type" value="Genomic_DNA"/>
</dbReference>
<dbReference type="EMBL" id="BC099458">
    <property type="protein sequence ID" value="AAH99458.1"/>
    <property type="molecule type" value="mRNA"/>
</dbReference>
<dbReference type="CCDS" id="CCDS26407.1"/>
<dbReference type="RefSeq" id="NP_064375.1">
    <property type="nucleotide sequence ID" value="NM_019991.1"/>
</dbReference>
<dbReference type="SMR" id="Q9JHK0"/>
<dbReference type="FunCoup" id="Q9JHK0">
    <property type="interactions" value="280"/>
</dbReference>
<dbReference type="STRING" id="10090.ENSMUSP00000023602"/>
<dbReference type="iPTMnet" id="Q9JHK0"/>
<dbReference type="PhosphoSitePlus" id="Q9JHK0"/>
<dbReference type="jPOST" id="Q9JHK0"/>
<dbReference type="PaxDb" id="10090-ENSMUSP00000023602"/>
<dbReference type="PeptideAtlas" id="Q9JHK0"/>
<dbReference type="DNASU" id="56635"/>
<dbReference type="Ensembl" id="ENSMUST00000023602.6">
    <property type="protein sequence ID" value="ENSMUSP00000023602.6"/>
    <property type="gene ID" value="ENSMUSG00000022886.6"/>
</dbReference>
<dbReference type="GeneID" id="56635"/>
<dbReference type="KEGG" id="mmu:56635"/>
<dbReference type="UCSC" id="uc007pye.1">
    <property type="organism name" value="mouse"/>
</dbReference>
<dbReference type="AGR" id="MGI:1861446"/>
<dbReference type="CTD" id="56635"/>
<dbReference type="MGI" id="MGI:1861446">
    <property type="gene designation" value="Prl2a1"/>
</dbReference>
<dbReference type="VEuPathDB" id="HostDB:ENSMUSG00000022886"/>
<dbReference type="eggNOG" id="ENOG502QYU3">
    <property type="taxonomic scope" value="Eukaryota"/>
</dbReference>
<dbReference type="GeneTree" id="ENSGT00950000182818"/>
<dbReference type="HOGENOM" id="CLU_088274_0_1_1"/>
<dbReference type="InParanoid" id="Q9JHK0"/>
<dbReference type="OMA" id="WREPLWH"/>
<dbReference type="OrthoDB" id="9599049at2759"/>
<dbReference type="PhylomeDB" id="Q9JHK0"/>
<dbReference type="TreeFam" id="TF332592"/>
<dbReference type="BioGRID-ORCS" id="56635">
    <property type="hits" value="1 hit in 75 CRISPR screens"/>
</dbReference>
<dbReference type="PRO" id="PR:Q9JHK0"/>
<dbReference type="Proteomes" id="UP000000589">
    <property type="component" value="Chromosome 13"/>
</dbReference>
<dbReference type="RNAct" id="Q9JHK0">
    <property type="molecule type" value="protein"/>
</dbReference>
<dbReference type="Bgee" id="ENSMUSG00000022886">
    <property type="expression patterns" value="Expressed in ectoplacental cone and 9 other cell types or tissues"/>
</dbReference>
<dbReference type="ExpressionAtlas" id="Q9JHK0">
    <property type="expression patterns" value="baseline and differential"/>
</dbReference>
<dbReference type="GO" id="GO:0005576">
    <property type="term" value="C:extracellular region"/>
    <property type="evidence" value="ECO:0007669"/>
    <property type="project" value="UniProtKB-SubCell"/>
</dbReference>
<dbReference type="GO" id="GO:0005179">
    <property type="term" value="F:hormone activity"/>
    <property type="evidence" value="ECO:0007669"/>
    <property type="project" value="UniProtKB-KW"/>
</dbReference>
<dbReference type="CDD" id="cd10288">
    <property type="entry name" value="prolactin_like"/>
    <property type="match status" value="1"/>
</dbReference>
<dbReference type="FunFam" id="1.20.1250.10:FF:000047">
    <property type="entry name" value="Growth hormone d21"/>
    <property type="match status" value="1"/>
</dbReference>
<dbReference type="Gene3D" id="1.20.1250.10">
    <property type="match status" value="1"/>
</dbReference>
<dbReference type="InterPro" id="IPR009079">
    <property type="entry name" value="4_helix_cytokine-like_core"/>
</dbReference>
<dbReference type="InterPro" id="IPR001400">
    <property type="entry name" value="Somatotropin/Prolactin"/>
</dbReference>
<dbReference type="InterPro" id="IPR018116">
    <property type="entry name" value="Somatotropin_CS"/>
</dbReference>
<dbReference type="PANTHER" id="PTHR11417:SF12">
    <property type="entry name" value="PROLACTIN-2A1"/>
    <property type="match status" value="1"/>
</dbReference>
<dbReference type="PANTHER" id="PTHR11417">
    <property type="entry name" value="SOMATOTROPIN,PROLACTIN"/>
    <property type="match status" value="1"/>
</dbReference>
<dbReference type="Pfam" id="PF00103">
    <property type="entry name" value="Hormone_1"/>
    <property type="match status" value="1"/>
</dbReference>
<dbReference type="PRINTS" id="PR00836">
    <property type="entry name" value="SOMATOTROPIN"/>
</dbReference>
<dbReference type="SUPFAM" id="SSF47266">
    <property type="entry name" value="4-helical cytokines"/>
    <property type="match status" value="1"/>
</dbReference>
<dbReference type="PROSITE" id="PS00266">
    <property type="entry name" value="SOMATOTROPIN_1"/>
    <property type="match status" value="1"/>
</dbReference>
<organism>
    <name type="scientific">Mus musculus</name>
    <name type="common">Mouse</name>
    <dbReference type="NCBI Taxonomy" id="10090"/>
    <lineage>
        <taxon>Eukaryota</taxon>
        <taxon>Metazoa</taxon>
        <taxon>Chordata</taxon>
        <taxon>Craniata</taxon>
        <taxon>Vertebrata</taxon>
        <taxon>Euteleostomi</taxon>
        <taxon>Mammalia</taxon>
        <taxon>Eutheria</taxon>
        <taxon>Euarchontoglires</taxon>
        <taxon>Glires</taxon>
        <taxon>Rodentia</taxon>
        <taxon>Myomorpha</taxon>
        <taxon>Muroidea</taxon>
        <taxon>Muridae</taxon>
        <taxon>Murinae</taxon>
        <taxon>Mus</taxon>
        <taxon>Mus</taxon>
    </lineage>
</organism>
<accession>Q9JHK0</accession>
<accession>Q9JI05</accession>
<keyword id="KW-1015">Disulfide bond</keyword>
<keyword id="KW-0372">Hormone</keyword>
<keyword id="KW-1185">Reference proteome</keyword>
<keyword id="KW-0964">Secreted</keyword>
<keyword id="KW-0732">Signal</keyword>
<gene>
    <name type="primary">Prl2a1</name>
    <name type="synonym">Prlpm</name>
</gene>
<reference key="1">
    <citation type="journal article" date="1999" name="Biochem. Biophys. Res. Commun.">
        <title>Identification of four members of the rat prolactin/growth hormone gene family.</title>
        <authorList>
            <person name="Ishibashi K."/>
            <person name="Imai M."/>
        </authorList>
    </citation>
    <scope>NUCLEOTIDE SEQUENCE [MRNA]</scope>
    <source>
        <tissue>Uterus</tissue>
    </source>
</reference>
<reference key="2">
    <citation type="journal article" date="2000" name="Biol. Reprod.">
        <title>Identification of three prolactin-related hormones as markers of invasive trophoblasts in the rat.</title>
        <authorList>
            <person name="Toft D.J."/>
            <person name="Linzer D.I.H."/>
        </authorList>
    </citation>
    <scope>NUCLEOTIDE SEQUENCE [MRNA]</scope>
</reference>
<reference key="3">
    <citation type="journal article" date="2000" name="J. Endocrinol.">
        <title>Three novel paralogs of the rodent prolactin gene family.</title>
        <authorList>
            <person name="Dai G."/>
            <person name="Wang D."/>
            <person name="Liu B."/>
            <person name="Kasik J.W."/>
            <person name="Mueller H."/>
            <person name="White R.A."/>
            <person name="Hummel G.S."/>
            <person name="Soares M.J."/>
        </authorList>
    </citation>
    <scope>NUCLEOTIDE SEQUENCE [MRNA]</scope>
    <scope>TISSUE SPECIFICITY</scope>
</reference>
<reference key="4">
    <citation type="journal article" date="2000" name="Proc. Natl. Acad. Sci. U.S.A.">
        <title>Genome-wide expression profiling of mid-gestation placenta and embryo using a 15,000 mouse developmental cDNA microarray.</title>
        <authorList>
            <person name="Tanaka T.S."/>
            <person name="Jaradat S.A."/>
            <person name="Lim M.K."/>
            <person name="Kargul G.J."/>
            <person name="Wang X."/>
            <person name="Grahovac M.J."/>
            <person name="Pantano S."/>
            <person name="Sano Y."/>
            <person name="Piao Y."/>
            <person name="Nagaraja R."/>
            <person name="Doi H."/>
            <person name="Wood W.H. III"/>
            <person name="Becker K.G."/>
            <person name="Ko M.S.H."/>
        </authorList>
    </citation>
    <scope>NUCLEOTIDE SEQUENCE [MRNA]</scope>
    <source>
        <tissue>Placenta</tissue>
    </source>
</reference>
<reference key="5">
    <citation type="journal article" date="2005" name="Science">
        <title>The transcriptional landscape of the mammalian genome.</title>
        <authorList>
            <person name="Carninci P."/>
            <person name="Kasukawa T."/>
            <person name="Katayama S."/>
            <person name="Gough J."/>
            <person name="Frith M.C."/>
            <person name="Maeda N."/>
            <person name="Oyama R."/>
            <person name="Ravasi T."/>
            <person name="Lenhard B."/>
            <person name="Wells C."/>
            <person name="Kodzius R."/>
            <person name="Shimokawa K."/>
            <person name="Bajic V.B."/>
            <person name="Brenner S.E."/>
            <person name="Batalov S."/>
            <person name="Forrest A.R."/>
            <person name="Zavolan M."/>
            <person name="Davis M.J."/>
            <person name="Wilming L.G."/>
            <person name="Aidinis V."/>
            <person name="Allen J.E."/>
            <person name="Ambesi-Impiombato A."/>
            <person name="Apweiler R."/>
            <person name="Aturaliya R.N."/>
            <person name="Bailey T.L."/>
            <person name="Bansal M."/>
            <person name="Baxter L."/>
            <person name="Beisel K.W."/>
            <person name="Bersano T."/>
            <person name="Bono H."/>
            <person name="Chalk A.M."/>
            <person name="Chiu K.P."/>
            <person name="Choudhary V."/>
            <person name="Christoffels A."/>
            <person name="Clutterbuck D.R."/>
            <person name="Crowe M.L."/>
            <person name="Dalla E."/>
            <person name="Dalrymple B.P."/>
            <person name="de Bono B."/>
            <person name="Della Gatta G."/>
            <person name="di Bernardo D."/>
            <person name="Down T."/>
            <person name="Engstrom P."/>
            <person name="Fagiolini M."/>
            <person name="Faulkner G."/>
            <person name="Fletcher C.F."/>
            <person name="Fukushima T."/>
            <person name="Furuno M."/>
            <person name="Futaki S."/>
            <person name="Gariboldi M."/>
            <person name="Georgii-Hemming P."/>
            <person name="Gingeras T.R."/>
            <person name="Gojobori T."/>
            <person name="Green R.E."/>
            <person name="Gustincich S."/>
            <person name="Harbers M."/>
            <person name="Hayashi Y."/>
            <person name="Hensch T.K."/>
            <person name="Hirokawa N."/>
            <person name="Hill D."/>
            <person name="Huminiecki L."/>
            <person name="Iacono M."/>
            <person name="Ikeo K."/>
            <person name="Iwama A."/>
            <person name="Ishikawa T."/>
            <person name="Jakt M."/>
            <person name="Kanapin A."/>
            <person name="Katoh M."/>
            <person name="Kawasawa Y."/>
            <person name="Kelso J."/>
            <person name="Kitamura H."/>
            <person name="Kitano H."/>
            <person name="Kollias G."/>
            <person name="Krishnan S.P."/>
            <person name="Kruger A."/>
            <person name="Kummerfeld S.K."/>
            <person name="Kurochkin I.V."/>
            <person name="Lareau L.F."/>
            <person name="Lazarevic D."/>
            <person name="Lipovich L."/>
            <person name="Liu J."/>
            <person name="Liuni S."/>
            <person name="McWilliam S."/>
            <person name="Madan Babu M."/>
            <person name="Madera M."/>
            <person name="Marchionni L."/>
            <person name="Matsuda H."/>
            <person name="Matsuzawa S."/>
            <person name="Miki H."/>
            <person name="Mignone F."/>
            <person name="Miyake S."/>
            <person name="Morris K."/>
            <person name="Mottagui-Tabar S."/>
            <person name="Mulder N."/>
            <person name="Nakano N."/>
            <person name="Nakauchi H."/>
            <person name="Ng P."/>
            <person name="Nilsson R."/>
            <person name="Nishiguchi S."/>
            <person name="Nishikawa S."/>
            <person name="Nori F."/>
            <person name="Ohara O."/>
            <person name="Okazaki Y."/>
            <person name="Orlando V."/>
            <person name="Pang K.C."/>
            <person name="Pavan W.J."/>
            <person name="Pavesi G."/>
            <person name="Pesole G."/>
            <person name="Petrovsky N."/>
            <person name="Piazza S."/>
            <person name="Reed J."/>
            <person name="Reid J.F."/>
            <person name="Ring B.Z."/>
            <person name="Ringwald M."/>
            <person name="Rost B."/>
            <person name="Ruan Y."/>
            <person name="Salzberg S.L."/>
            <person name="Sandelin A."/>
            <person name="Schneider C."/>
            <person name="Schoenbach C."/>
            <person name="Sekiguchi K."/>
            <person name="Semple C.A."/>
            <person name="Seno S."/>
            <person name="Sessa L."/>
            <person name="Sheng Y."/>
            <person name="Shibata Y."/>
            <person name="Shimada H."/>
            <person name="Shimada K."/>
            <person name="Silva D."/>
            <person name="Sinclair B."/>
            <person name="Sperling S."/>
            <person name="Stupka E."/>
            <person name="Sugiura K."/>
            <person name="Sultana R."/>
            <person name="Takenaka Y."/>
            <person name="Taki K."/>
            <person name="Tammoja K."/>
            <person name="Tan S.L."/>
            <person name="Tang S."/>
            <person name="Taylor M.S."/>
            <person name="Tegner J."/>
            <person name="Teichmann S.A."/>
            <person name="Ueda H.R."/>
            <person name="van Nimwegen E."/>
            <person name="Verardo R."/>
            <person name="Wei C.L."/>
            <person name="Yagi K."/>
            <person name="Yamanishi H."/>
            <person name="Zabarovsky E."/>
            <person name="Zhu S."/>
            <person name="Zimmer A."/>
            <person name="Hide W."/>
            <person name="Bult C."/>
            <person name="Grimmond S.M."/>
            <person name="Teasdale R.D."/>
            <person name="Liu E.T."/>
            <person name="Brusic V."/>
            <person name="Quackenbush J."/>
            <person name="Wahlestedt C."/>
            <person name="Mattick J.S."/>
            <person name="Hume D.A."/>
            <person name="Kai C."/>
            <person name="Sasaki D."/>
            <person name="Tomaru Y."/>
            <person name="Fukuda S."/>
            <person name="Kanamori-Katayama M."/>
            <person name="Suzuki M."/>
            <person name="Aoki J."/>
            <person name="Arakawa T."/>
            <person name="Iida J."/>
            <person name="Imamura K."/>
            <person name="Itoh M."/>
            <person name="Kato T."/>
            <person name="Kawaji H."/>
            <person name="Kawagashira N."/>
            <person name="Kawashima T."/>
            <person name="Kojima M."/>
            <person name="Kondo S."/>
            <person name="Konno H."/>
            <person name="Nakano K."/>
            <person name="Ninomiya N."/>
            <person name="Nishio T."/>
            <person name="Okada M."/>
            <person name="Plessy C."/>
            <person name="Shibata K."/>
            <person name="Shiraki T."/>
            <person name="Suzuki S."/>
            <person name="Tagami M."/>
            <person name="Waki K."/>
            <person name="Watahiki A."/>
            <person name="Okamura-Oho Y."/>
            <person name="Suzuki H."/>
            <person name="Kawai J."/>
            <person name="Hayashizaki Y."/>
        </authorList>
    </citation>
    <scope>NUCLEOTIDE SEQUENCE [LARGE SCALE MRNA]</scope>
    <source>
        <strain>C57BL/6J</strain>
        <tissue>Placenta</tissue>
    </source>
</reference>
<reference key="6">
    <citation type="journal article" date="2009" name="PLoS Biol.">
        <title>Lineage-specific biology revealed by a finished genome assembly of the mouse.</title>
        <authorList>
            <person name="Church D.M."/>
            <person name="Goodstadt L."/>
            <person name="Hillier L.W."/>
            <person name="Zody M.C."/>
            <person name="Goldstein S."/>
            <person name="She X."/>
            <person name="Bult C.J."/>
            <person name="Agarwala R."/>
            <person name="Cherry J.L."/>
            <person name="DiCuccio M."/>
            <person name="Hlavina W."/>
            <person name="Kapustin Y."/>
            <person name="Meric P."/>
            <person name="Maglott D."/>
            <person name="Birtle Z."/>
            <person name="Marques A.C."/>
            <person name="Graves T."/>
            <person name="Zhou S."/>
            <person name="Teague B."/>
            <person name="Potamousis K."/>
            <person name="Churas C."/>
            <person name="Place M."/>
            <person name="Herschleb J."/>
            <person name="Runnheim R."/>
            <person name="Forrest D."/>
            <person name="Amos-Landgraf J."/>
            <person name="Schwartz D.C."/>
            <person name="Cheng Z."/>
            <person name="Lindblad-Toh K."/>
            <person name="Eichler E.E."/>
            <person name="Ponting C.P."/>
        </authorList>
    </citation>
    <scope>NUCLEOTIDE SEQUENCE [LARGE SCALE GENOMIC DNA]</scope>
    <source>
        <strain>C57BL/6J</strain>
    </source>
</reference>
<reference key="7">
    <citation type="journal article" date="2004" name="Genome Res.">
        <title>The status, quality, and expansion of the NIH full-length cDNA project: the Mammalian Gene Collection (MGC).</title>
        <authorList>
            <consortium name="The MGC Project Team"/>
        </authorList>
    </citation>
    <scope>NUCLEOTIDE SEQUENCE [LARGE SCALE MRNA]</scope>
    <source>
        <tissue>Placenta</tissue>
    </source>
</reference>
<protein>
    <recommendedName>
        <fullName>Prolactin-2A1</fullName>
    </recommendedName>
    <alternativeName>
        <fullName>Placental prolactin-like protein M</fullName>
        <shortName>PLP-M</shortName>
        <shortName>PRL-like protein M</shortName>
    </alternativeName>
</protein>
<comment type="subcellular location">
    <subcellularLocation>
        <location evidence="1">Secreted</location>
    </subcellularLocation>
</comment>
<comment type="tissue specificity">
    <text evidence="3">Expressed specifically in the placenta. Expression restricted to the junctional zone of the chorioallantoic placenta.</text>
</comment>
<comment type="similarity">
    <text evidence="4">Belongs to the somatotropin/prolactin family.</text>
</comment>
<feature type="signal peptide" evidence="2">
    <location>
        <begin position="1"/>
        <end position="28"/>
    </location>
</feature>
<feature type="chain" id="PRO_0000045161" description="Prolactin-2A1">
    <location>
        <begin position="29"/>
        <end position="228"/>
    </location>
</feature>
<feature type="disulfide bond" evidence="1">
    <location>
        <begin position="87"/>
        <end position="203"/>
    </location>
</feature>
<feature type="disulfide bond" evidence="1">
    <location>
        <begin position="220"/>
        <end position="228"/>
    </location>
</feature>
<feature type="sequence conflict" description="In Ref. 4; AAF76230." evidence="4" ref="4">
    <original>N</original>
    <variation>T</variation>
    <location>
        <position position="136"/>
    </location>
</feature>
<evidence type="ECO:0000250" key="1"/>
<evidence type="ECO:0000255" key="2"/>
<evidence type="ECO:0000269" key="3">
    <source>
    </source>
</evidence>
<evidence type="ECO:0000305" key="4"/>